<dbReference type="EC" id="1.4.-.-" evidence="2"/>
<dbReference type="EC" id="4.4.1.14" evidence="3 7"/>
<dbReference type="EMBL" id="L31347">
    <property type="protein sequence ID" value="AAA73941.1"/>
    <property type="molecule type" value="mRNA"/>
</dbReference>
<dbReference type="EMBL" id="U89156">
    <property type="protein sequence ID" value="AAB68617.1"/>
    <property type="molecule type" value="Genomic_DNA"/>
</dbReference>
<dbReference type="EMBL" id="U03294">
    <property type="protein sequence ID" value="AAA03472.1"/>
    <property type="molecule type" value="mRNA"/>
</dbReference>
<dbReference type="PIR" id="T16999">
    <property type="entry name" value="T16999"/>
</dbReference>
<dbReference type="PDB" id="1B8G">
    <property type="method" value="X-ray"/>
    <property type="resolution" value="2.37 A"/>
    <property type="chains" value="A/B=3-431"/>
</dbReference>
<dbReference type="PDB" id="1M4N">
    <property type="method" value="X-ray"/>
    <property type="resolution" value="2.01 A"/>
    <property type="chains" value="A=1-435"/>
</dbReference>
<dbReference type="PDB" id="1M7Y">
    <property type="method" value="X-ray"/>
    <property type="resolution" value="1.60 A"/>
    <property type="chains" value="A=1-435"/>
</dbReference>
<dbReference type="PDB" id="1YNU">
    <property type="method" value="X-ray"/>
    <property type="resolution" value="2.25 A"/>
    <property type="chains" value="A=1-473"/>
</dbReference>
<dbReference type="PDB" id="3PIU">
    <property type="method" value="X-ray"/>
    <property type="resolution" value="1.35 A"/>
    <property type="chains" value="A=1-435"/>
</dbReference>
<dbReference type="PDBsum" id="1B8G"/>
<dbReference type="PDBsum" id="1M4N"/>
<dbReference type="PDBsum" id="1M7Y"/>
<dbReference type="PDBsum" id="1YNU"/>
<dbReference type="PDBsum" id="3PIU"/>
<dbReference type="SMR" id="P37821"/>
<dbReference type="BRENDA" id="4.4.1.14">
    <property type="organism ID" value="3164"/>
</dbReference>
<dbReference type="SABIO-RK" id="P37821"/>
<dbReference type="UniPathway" id="UPA00384">
    <property type="reaction ID" value="UER00562"/>
</dbReference>
<dbReference type="EvolutionaryTrace" id="P37821"/>
<dbReference type="GO" id="GO:0016847">
    <property type="term" value="F:1-aminocyclopropane-1-carboxylate synthase activity"/>
    <property type="evidence" value="ECO:0000314"/>
    <property type="project" value="UniProtKB"/>
</dbReference>
<dbReference type="GO" id="GO:0016491">
    <property type="term" value="F:oxidoreductase activity"/>
    <property type="evidence" value="ECO:0007669"/>
    <property type="project" value="UniProtKB-KW"/>
</dbReference>
<dbReference type="GO" id="GO:0030170">
    <property type="term" value="F:pyridoxal phosphate binding"/>
    <property type="evidence" value="ECO:0000303"/>
    <property type="project" value="UniProtKB"/>
</dbReference>
<dbReference type="GO" id="GO:0008483">
    <property type="term" value="F:transaminase activity"/>
    <property type="evidence" value="ECO:0007669"/>
    <property type="project" value="TreeGrafter"/>
</dbReference>
<dbReference type="GO" id="GO:0009693">
    <property type="term" value="P:ethylene biosynthetic process"/>
    <property type="evidence" value="ECO:0000305"/>
    <property type="project" value="UniProtKB"/>
</dbReference>
<dbReference type="GO" id="GO:0009835">
    <property type="term" value="P:fruit ripening"/>
    <property type="evidence" value="ECO:0007669"/>
    <property type="project" value="UniProtKB-KW"/>
</dbReference>
<dbReference type="CDD" id="cd00609">
    <property type="entry name" value="AAT_like"/>
    <property type="match status" value="1"/>
</dbReference>
<dbReference type="FunFam" id="3.90.1150.10:FF:000038">
    <property type="entry name" value="1-aminocyclopropane-1-carboxylate synthase 2"/>
    <property type="match status" value="1"/>
</dbReference>
<dbReference type="FunFam" id="3.40.640.10:FF:000051">
    <property type="entry name" value="1-aminocyclopropane-1-carboxylate synthase 3"/>
    <property type="match status" value="1"/>
</dbReference>
<dbReference type="Gene3D" id="3.90.1150.10">
    <property type="entry name" value="Aspartate Aminotransferase, domain 1"/>
    <property type="match status" value="1"/>
</dbReference>
<dbReference type="Gene3D" id="3.40.640.10">
    <property type="entry name" value="Type I PLP-dependent aspartate aminotransferase-like (Major domain)"/>
    <property type="match status" value="1"/>
</dbReference>
<dbReference type="InterPro" id="IPR004839">
    <property type="entry name" value="Aminotransferase_I/II_large"/>
</dbReference>
<dbReference type="InterPro" id="IPR050478">
    <property type="entry name" value="Ethylene_sulfur-biosynth"/>
</dbReference>
<dbReference type="InterPro" id="IPR004838">
    <property type="entry name" value="NHTrfase_class1_PyrdxlP-BS"/>
</dbReference>
<dbReference type="InterPro" id="IPR015424">
    <property type="entry name" value="PyrdxlP-dep_Trfase"/>
</dbReference>
<dbReference type="InterPro" id="IPR015421">
    <property type="entry name" value="PyrdxlP-dep_Trfase_major"/>
</dbReference>
<dbReference type="InterPro" id="IPR015422">
    <property type="entry name" value="PyrdxlP-dep_Trfase_small"/>
</dbReference>
<dbReference type="PANTHER" id="PTHR43795:SF10">
    <property type="entry name" value="1-AMINOCYCLOPROPANE-1-CARBOXYLATE SYNTHASE 9"/>
    <property type="match status" value="1"/>
</dbReference>
<dbReference type="PANTHER" id="PTHR43795">
    <property type="entry name" value="BIFUNCTIONAL ASPARTATE AMINOTRANSFERASE AND GLUTAMATE/ASPARTATE-PREPHENATE AMINOTRANSFERASE-RELATED"/>
    <property type="match status" value="1"/>
</dbReference>
<dbReference type="Pfam" id="PF00155">
    <property type="entry name" value="Aminotran_1_2"/>
    <property type="match status" value="1"/>
</dbReference>
<dbReference type="PRINTS" id="PR00753">
    <property type="entry name" value="ACCSYNTHASE"/>
</dbReference>
<dbReference type="SUPFAM" id="SSF53383">
    <property type="entry name" value="PLP-dependent transferases"/>
    <property type="match status" value="1"/>
</dbReference>
<dbReference type="PROSITE" id="PS00105">
    <property type="entry name" value="AA_TRANSFER_CLASS_1"/>
    <property type="match status" value="1"/>
</dbReference>
<name>1A1C_MALDO</name>
<organism>
    <name type="scientific">Malus domestica</name>
    <name type="common">Apple</name>
    <name type="synonym">Pyrus malus</name>
    <dbReference type="NCBI Taxonomy" id="3750"/>
    <lineage>
        <taxon>Eukaryota</taxon>
        <taxon>Viridiplantae</taxon>
        <taxon>Streptophyta</taxon>
        <taxon>Embryophyta</taxon>
        <taxon>Tracheophyta</taxon>
        <taxon>Spermatophyta</taxon>
        <taxon>Magnoliopsida</taxon>
        <taxon>eudicotyledons</taxon>
        <taxon>Gunneridae</taxon>
        <taxon>Pentapetalae</taxon>
        <taxon>rosids</taxon>
        <taxon>fabids</taxon>
        <taxon>Rosales</taxon>
        <taxon>Rosaceae</taxon>
        <taxon>Amygdaloideae</taxon>
        <taxon>Maleae</taxon>
        <taxon>Malus</taxon>
    </lineage>
</organism>
<protein>
    <recommendedName>
        <fullName evidence="9">1-aminocyclopropane-1-carboxylate synthase</fullName>
        <shortName>ACC synthase</shortName>
        <ecNumber evidence="2">1.4.-.-</ecNumber>
        <ecNumber evidence="3 7">4.4.1.14</ecNumber>
    </recommendedName>
    <alternativeName>
        <fullName>S-adenosyl-L-methionine methylthioadenosine-lyase</fullName>
    </alternativeName>
</protein>
<keyword id="KW-0002">3D-structure</keyword>
<keyword id="KW-0266">Ethylene biosynthesis</keyword>
<keyword id="KW-0292">Fruit ripening</keyword>
<keyword id="KW-0456">Lyase</keyword>
<keyword id="KW-0560">Oxidoreductase</keyword>
<keyword id="KW-0663">Pyridoxal phosphate</keyword>
<keyword id="KW-0949">S-adenosyl-L-methionine</keyword>
<proteinExistence type="evidence at protein level"/>
<reference key="1">
    <citation type="journal article" date="1995" name="Plant Physiol.">
        <title>A full-length cDNA encoding 1-aminocyclopropane-1-carboxylate synthase from apple.</title>
        <authorList>
            <person name="Lay-Yee M."/>
            <person name="Knighton M.L."/>
        </authorList>
    </citation>
    <scope>NUCLEOTIDE SEQUENCE [MRNA]</scope>
    <source>
        <strain>cv. Golden Delicious</strain>
        <tissue>Fruit cortical tissue</tissue>
    </source>
</reference>
<reference key="2">
    <citation type="journal article" date="1997" name="Plant Physiol.">
        <title>Genomic nucleotide sequence of a ripening-related 1-aminocyclopropane-1-carboxylate synthase gene (MdACS-1) in apple (Accession No. U89156) (PGR97-066).</title>
        <authorList>
            <person name="Harada T."/>
            <person name="Sunako T."/>
            <person name="Sakuraba W."/>
            <person name="Goto S."/>
            <person name="Akada S."/>
            <person name="Senda M."/>
            <person name="Ishikawa R."/>
            <person name="Niizeki M."/>
        </authorList>
    </citation>
    <scope>NUCLEOTIDE SEQUENCE [GENOMIC DNA]</scope>
    <source>
        <strain>cv. Golden Delicious</strain>
    </source>
</reference>
<reference key="3">
    <citation type="journal article" date="1991" name="Planta">
        <title>Cloning of a cDNA encoding 1-aminocyclopropane-1-carboxylate synthase and expression of its mRNA in ripening apple fruit.</title>
        <authorList>
            <person name="Dong J.G."/>
            <person name="Kim W.T."/>
            <person name="Yip W.K."/>
            <person name="Thompson G.A."/>
            <person name="Li L."/>
            <person name="Bennett A.B."/>
            <person name="Yang S.F."/>
        </authorList>
    </citation>
    <scope>NUCLEOTIDE SEQUENCE [MRNA] OF 10-473</scope>
    <scope>DEVELOPMENTAL STAGE</scope>
    <source>
        <strain>cv. Golden Delicious</strain>
        <tissue>Fruit</tissue>
    </source>
</reference>
<reference key="4">
    <citation type="journal article" date="1994" name="Proc. Natl. Acad. Sci. U.S.A.">
        <title>Expression of apple 1-aminocyclopropane-1-carboxylate synthase in Escherichia coli: kinetic characterization of wild-type and active-site mutant forms.</title>
        <authorList>
            <person name="White M.F."/>
            <person name="Vasquez J."/>
            <person name="Yang S.F."/>
            <person name="Kirsch J.F."/>
        </authorList>
    </citation>
    <scope>FUNCTION</scope>
    <scope>CATALYTIC ACTIVITY</scope>
    <scope>COFACTOR</scope>
    <scope>SUBUNIT</scope>
    <scope>MUTAGENESIS OF TYR-233; LYS-273 AND ARG-407</scope>
    <scope>BIOPHYSICOCHEMICAL PROPERTIES</scope>
</reference>
<reference key="5">
    <citation type="journal article" date="1997" name="Biochemistry">
        <title>Kinetic and spectroscopic investigations of wild-type and mutant forms of apple 1-aminocyclopropane-1-carboxylate synthase.</title>
        <authorList>
            <person name="Li Y."/>
            <person name="Feng L."/>
            <person name="Kirsch J.F."/>
        </authorList>
    </citation>
    <scope>COFACTOR</scope>
    <scope>MUTAGENESIS OF TYR-85 AND LYS-273</scope>
</reference>
<reference key="6">
    <citation type="journal article" date="2000" name="Biochemistry">
        <title>L-Vinylglycine is an alternative substrate as well as a mechanism-based inhibitor of 1-aminocyclopropane-1-carboxylate synthase.</title>
        <authorList>
            <person name="Feng L."/>
            <person name="Kirsch J.F."/>
        </authorList>
    </citation>
    <scope>FUNCTION</scope>
    <scope>CATALYTIC ACTIVITY</scope>
    <scope>BIOPHYSICOCHEMICAL PROPERTIES</scope>
    <scope>ACTIVITY REGULATION</scope>
</reference>
<reference key="7">
    <citation type="journal article" date="2001" name="Biochemistry">
        <title>Glutamate 47 in 1-aminocyclopropane-1-carboxylate synthase is a major specificity determinant.</title>
        <authorList>
            <person name="McCarthy D.L."/>
            <person name="Capitani G."/>
            <person name="Feng L."/>
            <person name="Gruetter M.G."/>
            <person name="Kirsch J.F."/>
        </authorList>
    </citation>
    <scope>FUNCTION</scope>
    <scope>CATALYTIC ACTIVITY</scope>
    <scope>MUTAGENESIS OF GLU-47</scope>
</reference>
<reference key="8">
    <citation type="journal article" date="2004" name="Arch. Biochem. Biophys.">
        <title>S-methylmethionine is both a substrate and an inactivator of 1-aminocyclopropane-1-carboxylate synthase.</title>
        <authorList>
            <person name="Ko S."/>
            <person name="Eliot A.C."/>
            <person name="Kirsch J.F."/>
        </authorList>
    </citation>
    <scope>FUNCTION</scope>
    <scope>BIOPHYSICOCHEMICAL PROPERTIES</scope>
    <scope>ACTIVITY REGULATION</scope>
</reference>
<reference evidence="13" key="9">
    <citation type="journal article" date="1999" name="J. Mol. Biol.">
        <title>Structure of 1-aminocyclopropane-1-carboxylate synthase, a key enzyme in the biosynthesis of the plant hormone ethylene.</title>
        <authorList>
            <person name="Capitani G."/>
            <person name="Hohenester E."/>
            <person name="Feng L."/>
            <person name="Storici P."/>
            <person name="Kirsch J.F."/>
            <person name="Jansonius J.N."/>
        </authorList>
    </citation>
    <scope>X-RAY CRYSTALLOGRAPHY (2.37 ANGSTROMS) OF 3-431 IN COMPLEX WITH PYRIDOXAL PHOSPHATE</scope>
    <scope>MUTAGENESIS OF ASP-230</scope>
</reference>
<reference evidence="15" key="10">
    <citation type="journal article" date="2002" name="J. Biol. Chem.">
        <title>Apple 1-aminocyclopropane-1-carboxylate synthase in complex with the inhibitor L-aminoethoxyvinylglycine. Evidence for a ketimine intermediate.</title>
        <authorList>
            <person name="Capitani G."/>
            <person name="McCarthy D.L."/>
            <person name="Gut H."/>
            <person name="Grutter M.G."/>
            <person name="Kirsch J.F."/>
        </authorList>
    </citation>
    <scope>X-RAY CRYSTALLOGRAPHY (1.60 ANGSTROMS) OF 1-435 IN COMPLEX WITH AN INHIBITOR</scope>
    <scope>ACTIVITY REGULATION</scope>
    <scope>SUBUNIT</scope>
</reference>
<reference evidence="14" key="11">
    <citation type="journal article" date="2003" name="Biochim. Biophys. Acta">
        <title>Structure of 1-aminocyclopropane-1-carboxylate synthase in complex with an amino-oxy analogue of the substrate: implications for substrate binding.</title>
        <authorList>
            <person name="Capitani G."/>
            <person name="Eliot A.C."/>
            <person name="Gut H."/>
            <person name="Khomutov R.M."/>
            <person name="Kirsch J.F."/>
            <person name="Gruetter M.G."/>
        </authorList>
    </citation>
    <scope>X-RAY CRYSTALLOGRAPHY (2.01 ANGSTROMS) OF 1-435 IN COMPLEX WITH SUBSTRATE ANALOG</scope>
</reference>
<reference evidence="16" key="12">
    <citation type="journal article" date="2005" name="FEBS Lett.">
        <title>Structure of ACC synthase inactivated by the mechanism-based inhibitor L-vinylglycine.</title>
        <authorList>
            <person name="Capitani G."/>
            <person name="Tschopp M."/>
            <person name="Eliot A.C."/>
            <person name="Kirsch J.F."/>
            <person name="Gruetter M.G."/>
        </authorList>
    </citation>
    <scope>X-RAY CRYSTALLOGRAPHY (2.25 ANGSTROMS) IN COMPLEX WITH AN INHIBITOR</scope>
</reference>
<reference evidence="17" key="13">
    <citation type="journal article" date="2011" name="FEBS Lett.">
        <title>Structural basis for reduced activity of 1-aminocyclopropane-1-carboxylate synthase affected by a mutation linked to andromonoecy.</title>
        <authorList>
            <person name="Schaerer M.A."/>
            <person name="Eliot A.C."/>
            <person name="Gruetter M.G."/>
            <person name="Capitani G."/>
        </authorList>
    </citation>
    <scope>X-RAY CRYSTALLOGRAPHY (1.35 ANGSTROMS) OF 1-435 IN COMPLEX WITH PYRIDOXAL PHOSPHATE</scope>
    <scope>MUTAGENESIS OF ALA-46</scope>
</reference>
<sequence length="473" mass="53251">MRMLSRNATFNSHGQDSSYFLGWQEYEKNPYHEVHNTNGIIQMGLAENQLCFDLLESWLAKNPEAAAFKKNGESIFAELALFQDYHGLPAFKKAMVDFMAEIRGNKVTFDPNHLVLTAGATSANETFIFCLADPGEAVLIPTPYYPGFDRDLKWRTGVEIVPIHCTSSNGFQITETALEEAYQEAEKRNLRVKGVLVTNPSNPLGTTMTRNELYLLLSFVEDKGIHLISDEIYSGTAFSSPSFISVMEVLKDRNCDENSEVWQRVHVVYSLSKDLGLPGFRVGAIYSNDDMVVAAATKMSSFGLVSSQTQHLLSAMLSDKKLTKNYIAENHKRLKQRQKKLVSGLQKSGISCLNGNAGLFCWVDMRHLLRSNTFEAEMELWKKIVYEVHLNISPGSSCHCTEPGWFRVCFANLPERTLDLAMQRLKAFVGEYYNVPEVNGGSQSSHLSHSRRQSLTKWVSRLSFDDRGPIPGR</sequence>
<comment type="function">
    <text evidence="2 3 5 7">Catalyzes the formation of 1-aminocyclopropane-1-carboxylate, a direct precursor of ethylene in higher plants (PubMed:11591146, PubMed:7809054). Also catalyzes the conversion of L-vinylglycine (L-VG) to alpha-ketobutyrate and ammonia (PubMed:10704193). Can use S-methylmethionine as substrate (PubMed:14678788).</text>
</comment>
<comment type="catalytic activity">
    <reaction evidence="3 7">
        <text>S-adenosyl-L-methionine = 1-aminocyclopropane-1-carboxylate + S-methyl-5'-thioadenosine + H(+)</text>
        <dbReference type="Rhea" id="RHEA:21744"/>
        <dbReference type="ChEBI" id="CHEBI:15378"/>
        <dbReference type="ChEBI" id="CHEBI:17509"/>
        <dbReference type="ChEBI" id="CHEBI:58360"/>
        <dbReference type="ChEBI" id="CHEBI:59789"/>
        <dbReference type="EC" id="4.4.1.14"/>
    </reaction>
</comment>
<comment type="catalytic activity">
    <reaction evidence="2">
        <text>(2S)-2-amino-3-butenoate + H2O = 2-oxobutanoate + NH4(+)</text>
        <dbReference type="Rhea" id="RHEA:51916"/>
        <dbReference type="ChEBI" id="CHEBI:15377"/>
        <dbReference type="ChEBI" id="CHEBI:16763"/>
        <dbReference type="ChEBI" id="CHEBI:28938"/>
        <dbReference type="ChEBI" id="CHEBI:134467"/>
    </reaction>
</comment>
<comment type="cofactor">
    <cofactor evidence="7 8">
        <name>pyridoxal 5'-phosphate</name>
        <dbReference type="ChEBI" id="CHEBI:597326"/>
    </cofactor>
</comment>
<comment type="activity regulation">
    <text evidence="2 4 5">Inhibited by L-aminoethoxyvinylglycine (AVG) (PubMed:12228256). Inhibited by L-vinylglycine (L-VG) (PubMed:10704193). Inhibited by S-methylmethionine through a L-VG ketimine intermediate (PubMed:14678788).</text>
</comment>
<comment type="biophysicochemical properties">
    <kinetics>
        <KM evidence="7">12 uM for S-adenosyl-L-methionine</KM>
        <KM evidence="2">1.4 mM for L-vinylglycine</KM>
        <KM evidence="5">4 mM for S-methylmethionine</KM>
        <text evidence="2 5 7">kcat is 9 sec(-1) per monomer with S-adenosyl-L-methionine as substrate (PubMed:7809054). kcat is 1.8 sec(-1) with L-vinylglycine as substrate (PubMed:10704193). kcat is 2.7 min(-1) with S-methylmethionine as substrate (PubMed:14678788).</text>
    </kinetics>
</comment>
<comment type="pathway">
    <text evidence="10">Alkene biosynthesis; ethylene biosynthesis via S-adenosyl-L-methionine; ethylene from S-adenosyl-L-methionine: step 1/2.</text>
</comment>
<comment type="subunit">
    <text evidence="4 7">Homodimer.</text>
</comment>
<comment type="developmental stage">
    <text evidence="6">Expressed during ripening.</text>
</comment>
<comment type="similarity">
    <text evidence="10">Belongs to the class-I pyridoxal-phosphate-dependent aminotransferase family.</text>
</comment>
<accession>P37821</accession>
<accession>O04993</accession>
<accession>Q40278</accession>
<evidence type="ECO:0000269" key="1">
    <source>
    </source>
</evidence>
<evidence type="ECO:0000269" key="2">
    <source>
    </source>
</evidence>
<evidence type="ECO:0000269" key="3">
    <source>
    </source>
</evidence>
<evidence type="ECO:0000269" key="4">
    <source>
    </source>
</evidence>
<evidence type="ECO:0000269" key="5">
    <source>
    </source>
</evidence>
<evidence type="ECO:0000269" key="6">
    <source>
    </source>
</evidence>
<evidence type="ECO:0000269" key="7">
    <source>
    </source>
</evidence>
<evidence type="ECO:0000269" key="8">
    <source>
    </source>
</evidence>
<evidence type="ECO:0000303" key="9">
    <source>
    </source>
</evidence>
<evidence type="ECO:0000305" key="10"/>
<evidence type="ECO:0000305" key="11">
    <source>
    </source>
</evidence>
<evidence type="ECO:0000305" key="12">
    <source>
    </source>
</evidence>
<evidence type="ECO:0007744" key="13">
    <source>
        <dbReference type="PDB" id="1B8G"/>
    </source>
</evidence>
<evidence type="ECO:0007744" key="14">
    <source>
        <dbReference type="PDB" id="1M4N"/>
    </source>
</evidence>
<evidence type="ECO:0007744" key="15">
    <source>
        <dbReference type="PDB" id="1M7Y"/>
    </source>
</evidence>
<evidence type="ECO:0007744" key="16">
    <source>
        <dbReference type="PDB" id="1YNU"/>
    </source>
</evidence>
<evidence type="ECO:0007744" key="17">
    <source>
        <dbReference type="PDB" id="3PIU"/>
    </source>
</evidence>
<evidence type="ECO:0007829" key="18">
    <source>
        <dbReference type="PDB" id="1M7Y"/>
    </source>
</evidence>
<evidence type="ECO:0007829" key="19">
    <source>
        <dbReference type="PDB" id="1YNU"/>
    </source>
</evidence>
<gene>
    <name evidence="9" type="primary">ACS-1</name>
</gene>
<feature type="chain" id="PRO_0000123915" description="1-aminocyclopropane-1-carboxylate synthase">
    <location>
        <begin position="1"/>
        <end position="473"/>
    </location>
</feature>
<feature type="binding site" evidence="11 14">
    <location>
        <begin position="84"/>
        <end position="85"/>
    </location>
    <ligand>
        <name>substrate</name>
    </ligand>
</feature>
<feature type="binding site" evidence="11 13 14">
    <location>
        <position position="145"/>
    </location>
    <ligand>
        <name>substrate</name>
    </ligand>
</feature>
<feature type="binding site" evidence="11 13 14">
    <location>
        <position position="151"/>
    </location>
    <ligand>
        <name>substrate</name>
    </ligand>
</feature>
<feature type="modified residue" description="N6-(pyridoxal phosphate)lysine" evidence="1 8 13 17">
    <location>
        <position position="273"/>
    </location>
</feature>
<feature type="mutagenesis site" description="Reduced activity." evidence="12">
    <original>A</original>
    <variation>V</variation>
    <location>
        <position position="46"/>
    </location>
</feature>
<feature type="mutagenesis site" description="Decreased catalytic activity and reaction specificity." evidence="3">
    <original>E</original>
    <variation>D</variation>
    <variation>Q</variation>
    <location>
        <position position="47"/>
    </location>
</feature>
<feature type="mutagenesis site" description="Strongly reduced catalytic activity." evidence="8">
    <original>Y</original>
    <variation>A</variation>
    <location>
        <position position="85"/>
    </location>
</feature>
<feature type="mutagenesis site" description="Loss of catalytic activity." evidence="1">
    <original>D</original>
    <variation>N</variation>
    <location>
        <position position="230"/>
    </location>
</feature>
<feature type="mutagenesis site" description="Decreased affinity for the substrate." evidence="7">
    <original>Y</original>
    <variation>A</variation>
    <location>
        <position position="233"/>
    </location>
</feature>
<feature type="mutagenesis site" description="Loss of catalytic activity." evidence="7 8">
    <original>K</original>
    <variation>A</variation>
    <location>
        <position position="273"/>
    </location>
</feature>
<feature type="mutagenesis site" description="Strongly decreased catalytic activity." evidence="7">
    <original>R</original>
    <variation>K</variation>
    <location>
        <position position="407"/>
    </location>
</feature>
<feature type="sequence conflict" description="In Ref. 3; AAA03472." evidence="10" ref="3">
    <original>Q</original>
    <variation>E</variation>
    <location>
        <position position="15"/>
    </location>
</feature>
<feature type="sequence conflict" description="In Ref. 3; AAA03472." evidence="10" ref="3">
    <original>E</original>
    <variation>K</variation>
    <location>
        <position position="101"/>
    </location>
</feature>
<feature type="turn" evidence="19">
    <location>
        <begin position="6"/>
        <end position="8"/>
    </location>
</feature>
<feature type="helix" evidence="18">
    <location>
        <begin position="18"/>
        <end position="28"/>
    </location>
</feature>
<feature type="strand" evidence="18">
    <location>
        <begin position="33"/>
        <end position="35"/>
    </location>
</feature>
<feature type="strand" evidence="18">
    <location>
        <begin position="39"/>
        <end position="42"/>
    </location>
</feature>
<feature type="helix" evidence="18">
    <location>
        <begin position="52"/>
        <end position="61"/>
    </location>
</feature>
<feature type="helix" evidence="18">
    <location>
        <begin position="65"/>
        <end position="67"/>
    </location>
</feature>
<feature type="helix" evidence="18">
    <location>
        <begin position="76"/>
        <end position="81"/>
    </location>
</feature>
<feature type="helix" evidence="18">
    <location>
        <begin position="89"/>
        <end position="102"/>
    </location>
</feature>
<feature type="turn" evidence="18">
    <location>
        <begin position="103"/>
        <end position="105"/>
    </location>
</feature>
<feature type="helix" evidence="18">
    <location>
        <begin position="111"/>
        <end position="113"/>
    </location>
</feature>
<feature type="strand" evidence="18">
    <location>
        <begin position="114"/>
        <end position="118"/>
    </location>
</feature>
<feature type="helix" evidence="18">
    <location>
        <begin position="119"/>
        <end position="131"/>
    </location>
</feature>
<feature type="strand" evidence="18">
    <location>
        <begin position="137"/>
        <end position="143"/>
    </location>
</feature>
<feature type="helix" evidence="18">
    <location>
        <begin position="148"/>
        <end position="151"/>
    </location>
</feature>
<feature type="turn" evidence="18">
    <location>
        <begin position="152"/>
        <end position="156"/>
    </location>
</feature>
<feature type="strand" evidence="18">
    <location>
        <begin position="159"/>
        <end position="164"/>
    </location>
</feature>
<feature type="helix" evidence="18">
    <location>
        <begin position="167"/>
        <end position="169"/>
    </location>
</feature>
<feature type="helix" evidence="18">
    <location>
        <begin position="175"/>
        <end position="187"/>
    </location>
</feature>
<feature type="strand" evidence="18">
    <location>
        <begin position="192"/>
        <end position="200"/>
    </location>
</feature>
<feature type="turn" evidence="18">
    <location>
        <begin position="202"/>
        <end position="204"/>
    </location>
</feature>
<feature type="helix" evidence="18">
    <location>
        <begin position="210"/>
        <end position="223"/>
    </location>
</feature>
<feature type="strand" evidence="18">
    <location>
        <begin position="226"/>
        <end position="230"/>
    </location>
</feature>
<feature type="helix" evidence="18">
    <location>
        <begin position="234"/>
        <end position="236"/>
    </location>
</feature>
<feature type="strand" evidence="18">
    <location>
        <begin position="239"/>
        <end position="241"/>
    </location>
</feature>
<feature type="helix" evidence="18">
    <location>
        <begin position="246"/>
        <end position="249"/>
    </location>
</feature>
<feature type="turn" evidence="18">
    <location>
        <begin position="250"/>
        <end position="254"/>
    </location>
</feature>
<feature type="strand" evidence="18">
    <location>
        <begin position="256"/>
        <end position="260"/>
    </location>
</feature>
<feature type="helix" evidence="18">
    <location>
        <begin position="261"/>
        <end position="264"/>
    </location>
</feature>
<feature type="strand" evidence="18">
    <location>
        <begin position="265"/>
        <end position="275"/>
    </location>
</feature>
<feature type="helix" evidence="18">
    <location>
        <begin position="278"/>
        <end position="280"/>
    </location>
</feature>
<feature type="strand" evidence="18">
    <location>
        <begin position="282"/>
        <end position="288"/>
    </location>
</feature>
<feature type="helix" evidence="18">
    <location>
        <begin position="290"/>
        <end position="299"/>
    </location>
</feature>
<feature type="helix" evidence="18">
    <location>
        <begin position="300"/>
        <end position="302"/>
    </location>
</feature>
<feature type="helix" evidence="18">
    <location>
        <begin position="307"/>
        <end position="318"/>
    </location>
</feature>
<feature type="helix" evidence="18">
    <location>
        <begin position="320"/>
        <end position="346"/>
    </location>
</feature>
<feature type="turn" evidence="18">
    <location>
        <begin position="347"/>
        <end position="349"/>
    </location>
</feature>
<feature type="strand" evidence="18">
    <location>
        <begin position="357"/>
        <end position="364"/>
    </location>
</feature>
<feature type="helix" evidence="18">
    <location>
        <begin position="366"/>
        <end position="368"/>
    </location>
</feature>
<feature type="strand" evidence="18">
    <location>
        <begin position="369"/>
        <end position="373"/>
    </location>
</feature>
<feature type="helix" evidence="18">
    <location>
        <begin position="374"/>
        <end position="386"/>
    </location>
</feature>
<feature type="helix" evidence="18">
    <location>
        <begin position="395"/>
        <end position="398"/>
    </location>
</feature>
<feature type="strand" evidence="18">
    <location>
        <begin position="405"/>
        <end position="409"/>
    </location>
</feature>
<feature type="strand" evidence="18">
    <location>
        <begin position="411"/>
        <end position="413"/>
    </location>
</feature>
<feature type="helix" evidence="18">
    <location>
        <begin position="415"/>
        <end position="432"/>
    </location>
</feature>